<evidence type="ECO:0000250" key="1"/>
<evidence type="ECO:0000250" key="2">
    <source>
        <dbReference type="UniProtKB" id="P18440"/>
    </source>
</evidence>
<evidence type="ECO:0000305" key="3"/>
<name>ARY1_MESAU</name>
<dbReference type="EC" id="2.3.1.5"/>
<dbReference type="EMBL" id="X54142">
    <property type="protein sequence ID" value="CAA38081.1"/>
    <property type="molecule type" value="mRNA"/>
</dbReference>
<dbReference type="EMBL" id="U05271">
    <property type="protein sequence ID" value="AAB60522.1"/>
    <property type="molecule type" value="Genomic_DNA"/>
</dbReference>
<dbReference type="EMBL" id="S72004">
    <property type="protein sequence ID" value="AAB31916.1"/>
    <property type="molecule type" value="Genomic_DNA"/>
</dbReference>
<dbReference type="PIR" id="A61397">
    <property type="entry name" value="A61397"/>
</dbReference>
<dbReference type="RefSeq" id="NP_001268750.1">
    <property type="nucleotide sequence ID" value="NM_001281821.1"/>
</dbReference>
<dbReference type="RefSeq" id="XP_012972602.1">
    <property type="nucleotide sequence ID" value="XM_013117148.1"/>
</dbReference>
<dbReference type="RefSeq" id="XP_012972603.1">
    <property type="nucleotide sequence ID" value="XM_013117149.1"/>
</dbReference>
<dbReference type="RefSeq" id="XP_012972604.1">
    <property type="nucleotide sequence ID" value="XM_013117150.1"/>
</dbReference>
<dbReference type="RefSeq" id="XP_012972605.1">
    <property type="nucleotide sequence ID" value="XM_013117151.1"/>
</dbReference>
<dbReference type="RefSeq" id="XP_012972606.1">
    <property type="nucleotide sequence ID" value="XM_013117152.1"/>
</dbReference>
<dbReference type="RefSeq" id="XP_012972608.1">
    <property type="nucleotide sequence ID" value="XM_013117154.1"/>
</dbReference>
<dbReference type="SMR" id="P50292"/>
<dbReference type="STRING" id="10036.ENSMAUP00000013782"/>
<dbReference type="Ensembl" id="ENSMAUT00000017697">
    <property type="protein sequence ID" value="ENSMAUP00000013782"/>
    <property type="gene ID" value="ENSMAUG00000013734"/>
</dbReference>
<dbReference type="GeneID" id="101840278"/>
<dbReference type="KEGG" id="maua:101840278"/>
<dbReference type="CTD" id="9"/>
<dbReference type="eggNOG" id="ENOG502RD0D">
    <property type="taxonomic scope" value="Eukaryota"/>
</dbReference>
<dbReference type="OrthoDB" id="10260017at2759"/>
<dbReference type="BRENDA" id="2.3.1.5">
    <property type="organism ID" value="3239"/>
</dbReference>
<dbReference type="BRENDA" id="2.3.1.56">
    <property type="organism ID" value="3239"/>
</dbReference>
<dbReference type="Proteomes" id="UP000189706">
    <property type="component" value="Unplaced"/>
</dbReference>
<dbReference type="GO" id="GO:0005737">
    <property type="term" value="C:cytoplasm"/>
    <property type="evidence" value="ECO:0007669"/>
    <property type="project" value="UniProtKB-SubCell"/>
</dbReference>
<dbReference type="GO" id="GO:0004060">
    <property type="term" value="F:arylamine N-acetyltransferase activity"/>
    <property type="evidence" value="ECO:0007669"/>
    <property type="project" value="UniProtKB-EC"/>
</dbReference>
<dbReference type="FunFam" id="3.30.2140.20:FF:000001">
    <property type="entry name" value="Arylamine N-acetyltransferase 1"/>
    <property type="match status" value="1"/>
</dbReference>
<dbReference type="Gene3D" id="3.30.2140.20">
    <property type="match status" value="1"/>
</dbReference>
<dbReference type="InterPro" id="IPR001447">
    <property type="entry name" value="Arylamine_N-AcTrfase"/>
</dbReference>
<dbReference type="InterPro" id="IPR053710">
    <property type="entry name" value="Arylamine_NAT_domain_sf"/>
</dbReference>
<dbReference type="InterPro" id="IPR038765">
    <property type="entry name" value="Papain-like_cys_pep_sf"/>
</dbReference>
<dbReference type="PANTHER" id="PTHR11786:SF2">
    <property type="entry name" value="ARYLAMINE N-ACETYLTRANSFERASE 1"/>
    <property type="match status" value="1"/>
</dbReference>
<dbReference type="PANTHER" id="PTHR11786">
    <property type="entry name" value="N-HYDROXYARYLAMINE O-ACETYLTRANSFERASE"/>
    <property type="match status" value="1"/>
</dbReference>
<dbReference type="Pfam" id="PF00797">
    <property type="entry name" value="Acetyltransf_2"/>
    <property type="match status" value="1"/>
</dbReference>
<dbReference type="PRINTS" id="PR01543">
    <property type="entry name" value="ANATRNSFRASE"/>
</dbReference>
<dbReference type="SUPFAM" id="SSF54001">
    <property type="entry name" value="Cysteine proteinases"/>
    <property type="match status" value="1"/>
</dbReference>
<proteinExistence type="evidence at transcript level"/>
<comment type="function">
    <text>Participates in the detoxification of a plethora of hydrazine and arylamine drugs.</text>
</comment>
<comment type="catalytic activity">
    <reaction>
        <text>an arylamine + acetyl-CoA = an N-acetylarylamine + CoA</text>
        <dbReference type="Rhea" id="RHEA:16613"/>
        <dbReference type="ChEBI" id="CHEBI:13790"/>
        <dbReference type="ChEBI" id="CHEBI:50471"/>
        <dbReference type="ChEBI" id="CHEBI:57287"/>
        <dbReference type="ChEBI" id="CHEBI:57288"/>
        <dbReference type="EC" id="2.3.1.5"/>
    </reaction>
</comment>
<comment type="subcellular location">
    <subcellularLocation>
        <location>Cytoplasm</location>
    </subcellularLocation>
</comment>
<comment type="similarity">
    <text evidence="3">Belongs to the arylamine N-acetyltransferase family.</text>
</comment>
<keyword id="KW-0007">Acetylation</keyword>
<keyword id="KW-0012">Acyltransferase</keyword>
<keyword id="KW-0963">Cytoplasm</keyword>
<keyword id="KW-1185">Reference proteome</keyword>
<keyword id="KW-0808">Transferase</keyword>
<feature type="chain" id="PRO_0000107906" description="Arylamine N-acetyltransferase 1">
    <location>
        <begin position="1"/>
        <end position="290"/>
    </location>
</feature>
<feature type="active site" description="Acyl-thioester intermediate" evidence="1">
    <location>
        <position position="68"/>
    </location>
</feature>
<feature type="active site" evidence="1">
    <location>
        <position position="107"/>
    </location>
</feature>
<feature type="active site" evidence="1">
    <location>
        <position position="122"/>
    </location>
</feature>
<feature type="binding site" evidence="1">
    <location>
        <position position="103"/>
    </location>
    <ligand>
        <name>CoA</name>
        <dbReference type="ChEBI" id="CHEBI:57287"/>
    </ligand>
</feature>
<feature type="binding site" evidence="1">
    <location>
        <begin position="106"/>
        <end position="107"/>
    </location>
    <ligand>
        <name>substrate</name>
    </ligand>
</feature>
<feature type="binding site" evidence="1">
    <location>
        <position position="208"/>
    </location>
    <ligand>
        <name>CoA</name>
        <dbReference type="ChEBI" id="CHEBI:57287"/>
    </ligand>
</feature>
<feature type="binding site" evidence="1">
    <location>
        <position position="287"/>
    </location>
    <ligand>
        <name>CoA</name>
        <dbReference type="ChEBI" id="CHEBI:57287"/>
    </ligand>
</feature>
<feature type="modified residue" description="N-acetylmethionine" evidence="2">
    <location>
        <position position="1"/>
    </location>
</feature>
<protein>
    <recommendedName>
        <fullName>Arylamine N-acetyltransferase 1</fullName>
        <ecNumber>2.3.1.5</ecNumber>
    </recommendedName>
    <alternativeName>
        <fullName>Arylamide acetylase 1</fullName>
    </alternativeName>
    <alternativeName>
        <fullName>Monomorphic arylamine N-acetyltransferase</fullName>
        <shortName>MNAT</shortName>
    </alternativeName>
    <alternativeName>
        <fullName>N-acetyltransferase type 1</fullName>
        <shortName>NAT-1</shortName>
    </alternativeName>
</protein>
<gene>
    <name type="primary">NAT1</name>
    <name type="synonym">AAC1</name>
</gene>
<sequence>MDIEAYFERIGYNNPVYTLDLATLTEVLQHQMRTIPFENLNMHCGEAMDLGLEATFDQIVRKKRGGWCLQVNHLLYWALTQMGFETTMLGGYVYIVPVSKYSSEMIHLLVQVTISDRNYIVDAAYGGSYQMWEPVELASGKDQPQVPAIFRLTEENETWYLDQIRREQHVPNQEFVNSDLLEKNTYRKIYSFTLQPRTIEDFEYANTYLQISPVSVFVNTSFCSLQTSEGVCCLIGSTIARRKFSYKENVDLVEFKNVSEEEIEDVLKTAFGVSLERKFVPKNGNLSFSI</sequence>
<reference key="1">
    <citation type="journal article" date="1991" name="Mol. Carcinog.">
        <title>An arylamine acetyltransferase (AT-I) from Syrian golden hamster liver: cloning, complete nucleotide sequence, and expression in mammalian cells.</title>
        <authorList>
            <person name="Abu-Zeid M."/>
            <person name="Nagata K."/>
            <person name="Miyata M."/>
            <person name="Ozawa S."/>
            <person name="Fukuhara M."/>
            <person name="Yamazoe Y."/>
        </authorList>
    </citation>
    <scope>NUCLEOTIDE SEQUENCE [MRNA]</scope>
    <source>
        <tissue>Liver</tissue>
    </source>
</reference>
<reference key="2">
    <citation type="journal article" date="1994" name="Pharmacogenetics">
        <title>Syrian hamster monomorphic N-acetyltransferase (NAT1) alleles: amplification, cloning, sequencing, and expression in E. coli.</title>
        <authorList>
            <person name="Ferguson R.J."/>
            <person name="Doll M.A."/>
            <person name="Rustan T.D."/>
            <person name="Baumstark B.R."/>
            <person name="Hein D.W."/>
        </authorList>
    </citation>
    <scope>NUCLEOTIDE SEQUENCE [GENOMIC DNA]</scope>
    <source>
        <tissue>Heart</tissue>
    </source>
</reference>
<reference key="3">
    <citation type="journal article" date="1994" name="Pharmacogenetics">
        <title>Primary structure and molecular basis of polymorphic appearance of an acetyltransferase (AT-II)* in hamsters.</title>
        <authorList>
            <person name="Nagata K."/>
            <person name="Ozawa S."/>
            <person name="Miyata M."/>
            <person name="Shimada M."/>
            <person name="Yamazoe Y."/>
            <person name="Kato R."/>
        </authorList>
    </citation>
    <scope>NUCLEOTIDE SEQUENCE [GENOMIC DNA]</scope>
</reference>
<reference key="4">
    <citation type="journal article" date="1995" name="Protein Expr. Purif.">
        <title>Hamster monomorphic arylamine N-acetyltransferase: expression in Escherichia coli and purification.</title>
        <authorList>
            <person name="Bergstrom C.P."/>
            <person name="Wagner C.R."/>
            <person name="Ann D.K."/>
            <person name="Hanna P.E."/>
        </authorList>
    </citation>
    <scope>NUCLEOTIDE SEQUENCE [MRNA]</scope>
</reference>
<accession>P50292</accession>
<organism>
    <name type="scientific">Mesocricetus auratus</name>
    <name type="common">Golden hamster</name>
    <dbReference type="NCBI Taxonomy" id="10036"/>
    <lineage>
        <taxon>Eukaryota</taxon>
        <taxon>Metazoa</taxon>
        <taxon>Chordata</taxon>
        <taxon>Craniata</taxon>
        <taxon>Vertebrata</taxon>
        <taxon>Euteleostomi</taxon>
        <taxon>Mammalia</taxon>
        <taxon>Eutheria</taxon>
        <taxon>Euarchontoglires</taxon>
        <taxon>Glires</taxon>
        <taxon>Rodentia</taxon>
        <taxon>Myomorpha</taxon>
        <taxon>Muroidea</taxon>
        <taxon>Cricetidae</taxon>
        <taxon>Cricetinae</taxon>
        <taxon>Mesocricetus</taxon>
    </lineage>
</organism>